<organism>
    <name type="scientific">Streptococcus pyogenes serotype M2 (strain MGAS10270)</name>
    <dbReference type="NCBI Taxonomy" id="370552"/>
    <lineage>
        <taxon>Bacteria</taxon>
        <taxon>Bacillati</taxon>
        <taxon>Bacillota</taxon>
        <taxon>Bacilli</taxon>
        <taxon>Lactobacillales</taxon>
        <taxon>Streptococcaceae</taxon>
        <taxon>Streptococcus</taxon>
    </lineage>
</organism>
<sequence>MGKYFGTDGVRGEANVELTPELAFKLGRFGGYVLSQHETERPKVFVARDTRISGEMLESALIAGLLSVGIEVYKLGVLATPGVSYLVRTEKASAGVMISASHNPALDNGIKFFGNDGFKLADDQELEIEALLDAPEDTLPRPSAEGLGTLVDYPEGLRKYEKFLVTTGTDLSGMTVALDTANGAASVSARDVFLDLNAEIAVIGEKPNGLNINDGVGSTHPEQLQELVKETGADLGLAFDGDSDRLIAVDETGEIVDGDRIMFIIGKYLSEKGLLAHNTIVTTVMSNLGFHKALDKQGINKAITAVGDRYVVEEMRSSGYNLGGEQSGHVIIMDYNTTGDGQLTAIQLAKVMKETGKSLSELAAEVTIYPQKLVNIRVENSMKDRAMEVPAIANIIAKMEDEMAGNGRILVRPSGTEPLLRVMAEAPTDAEVDYYVDTIADVVRTEIGCDN</sequence>
<proteinExistence type="inferred from homology"/>
<comment type="function">
    <text evidence="1">Catalyzes the conversion of glucosamine-6-phosphate to glucosamine-1-phosphate.</text>
</comment>
<comment type="catalytic activity">
    <reaction evidence="1">
        <text>alpha-D-glucosamine 1-phosphate = D-glucosamine 6-phosphate</text>
        <dbReference type="Rhea" id="RHEA:23424"/>
        <dbReference type="ChEBI" id="CHEBI:58516"/>
        <dbReference type="ChEBI" id="CHEBI:58725"/>
        <dbReference type="EC" id="5.4.2.10"/>
    </reaction>
</comment>
<comment type="cofactor">
    <cofactor evidence="1">
        <name>Mg(2+)</name>
        <dbReference type="ChEBI" id="CHEBI:18420"/>
    </cofactor>
    <text evidence="1">Binds 1 Mg(2+) ion per subunit.</text>
</comment>
<comment type="PTM">
    <text evidence="1">Activated by phosphorylation.</text>
</comment>
<comment type="similarity">
    <text evidence="1">Belongs to the phosphohexose mutase family.</text>
</comment>
<evidence type="ECO:0000255" key="1">
    <source>
        <dbReference type="HAMAP-Rule" id="MF_01554"/>
    </source>
</evidence>
<name>GLMM_STRPD</name>
<protein>
    <recommendedName>
        <fullName evidence="1">Phosphoglucosamine mutase</fullName>
        <ecNumber evidence="1">5.4.2.10</ecNumber>
    </recommendedName>
</protein>
<reference key="1">
    <citation type="journal article" date="2006" name="Proc. Natl. Acad. Sci. U.S.A.">
        <title>Molecular genetic anatomy of inter- and intraserotype variation in the human bacterial pathogen group A Streptococcus.</title>
        <authorList>
            <person name="Beres S.B."/>
            <person name="Richter E.W."/>
            <person name="Nagiec M.J."/>
            <person name="Sumby P."/>
            <person name="Porcella S.F."/>
            <person name="DeLeo F.R."/>
            <person name="Musser J.M."/>
        </authorList>
    </citation>
    <scope>NUCLEOTIDE SEQUENCE [LARGE SCALE GENOMIC DNA]</scope>
    <source>
        <strain>MGAS10270</strain>
    </source>
</reference>
<gene>
    <name evidence="1" type="primary">glmM</name>
    <name type="ordered locus">MGAS10270_Spy0880</name>
</gene>
<dbReference type="EC" id="5.4.2.10" evidence="1"/>
<dbReference type="EMBL" id="CP000260">
    <property type="protein sequence ID" value="ABF33945.1"/>
    <property type="molecule type" value="Genomic_DNA"/>
</dbReference>
<dbReference type="SMR" id="Q1JH49"/>
<dbReference type="KEGG" id="sph:MGAS10270_Spy0880"/>
<dbReference type="HOGENOM" id="CLU_016950_7_0_9"/>
<dbReference type="Proteomes" id="UP000002436">
    <property type="component" value="Chromosome"/>
</dbReference>
<dbReference type="GO" id="GO:0005829">
    <property type="term" value="C:cytosol"/>
    <property type="evidence" value="ECO:0007669"/>
    <property type="project" value="TreeGrafter"/>
</dbReference>
<dbReference type="GO" id="GO:0000287">
    <property type="term" value="F:magnesium ion binding"/>
    <property type="evidence" value="ECO:0007669"/>
    <property type="project" value="UniProtKB-UniRule"/>
</dbReference>
<dbReference type="GO" id="GO:0008966">
    <property type="term" value="F:phosphoglucosamine mutase activity"/>
    <property type="evidence" value="ECO:0007669"/>
    <property type="project" value="UniProtKB-UniRule"/>
</dbReference>
<dbReference type="GO" id="GO:0004615">
    <property type="term" value="F:phosphomannomutase activity"/>
    <property type="evidence" value="ECO:0007669"/>
    <property type="project" value="TreeGrafter"/>
</dbReference>
<dbReference type="GO" id="GO:0005975">
    <property type="term" value="P:carbohydrate metabolic process"/>
    <property type="evidence" value="ECO:0007669"/>
    <property type="project" value="InterPro"/>
</dbReference>
<dbReference type="GO" id="GO:0009252">
    <property type="term" value="P:peptidoglycan biosynthetic process"/>
    <property type="evidence" value="ECO:0007669"/>
    <property type="project" value="TreeGrafter"/>
</dbReference>
<dbReference type="GO" id="GO:0006048">
    <property type="term" value="P:UDP-N-acetylglucosamine biosynthetic process"/>
    <property type="evidence" value="ECO:0007669"/>
    <property type="project" value="TreeGrafter"/>
</dbReference>
<dbReference type="CDD" id="cd05802">
    <property type="entry name" value="GlmM"/>
    <property type="match status" value="1"/>
</dbReference>
<dbReference type="FunFam" id="3.30.310.50:FF:000001">
    <property type="entry name" value="Phosphoglucosamine mutase"/>
    <property type="match status" value="1"/>
</dbReference>
<dbReference type="FunFam" id="3.40.120.10:FF:000001">
    <property type="entry name" value="Phosphoglucosamine mutase"/>
    <property type="match status" value="1"/>
</dbReference>
<dbReference type="FunFam" id="3.40.120.10:FF:000002">
    <property type="entry name" value="Phosphoglucosamine mutase"/>
    <property type="match status" value="1"/>
</dbReference>
<dbReference type="Gene3D" id="3.40.120.10">
    <property type="entry name" value="Alpha-D-Glucose-1,6-Bisphosphate, subunit A, domain 3"/>
    <property type="match status" value="3"/>
</dbReference>
<dbReference type="Gene3D" id="3.30.310.50">
    <property type="entry name" value="Alpha-D-phosphohexomutase, C-terminal domain"/>
    <property type="match status" value="1"/>
</dbReference>
<dbReference type="HAMAP" id="MF_01554_B">
    <property type="entry name" value="GlmM_B"/>
    <property type="match status" value="1"/>
</dbReference>
<dbReference type="InterPro" id="IPR005844">
    <property type="entry name" value="A-D-PHexomutase_a/b/a-I"/>
</dbReference>
<dbReference type="InterPro" id="IPR016055">
    <property type="entry name" value="A-D-PHexomutase_a/b/a-I/II/III"/>
</dbReference>
<dbReference type="InterPro" id="IPR005845">
    <property type="entry name" value="A-D-PHexomutase_a/b/a-II"/>
</dbReference>
<dbReference type="InterPro" id="IPR005846">
    <property type="entry name" value="A-D-PHexomutase_a/b/a-III"/>
</dbReference>
<dbReference type="InterPro" id="IPR005843">
    <property type="entry name" value="A-D-PHexomutase_C"/>
</dbReference>
<dbReference type="InterPro" id="IPR036900">
    <property type="entry name" value="A-D-PHexomutase_C_sf"/>
</dbReference>
<dbReference type="InterPro" id="IPR016066">
    <property type="entry name" value="A-D-PHexomutase_CS"/>
</dbReference>
<dbReference type="InterPro" id="IPR005841">
    <property type="entry name" value="Alpha-D-phosphohexomutase_SF"/>
</dbReference>
<dbReference type="InterPro" id="IPR006352">
    <property type="entry name" value="GlmM_bact"/>
</dbReference>
<dbReference type="InterPro" id="IPR050060">
    <property type="entry name" value="Phosphoglucosamine_mutase"/>
</dbReference>
<dbReference type="NCBIfam" id="TIGR01455">
    <property type="entry name" value="glmM"/>
    <property type="match status" value="1"/>
</dbReference>
<dbReference type="PANTHER" id="PTHR42946:SF1">
    <property type="entry name" value="PHOSPHOGLUCOMUTASE (ALPHA-D-GLUCOSE-1,6-BISPHOSPHATE-DEPENDENT)"/>
    <property type="match status" value="1"/>
</dbReference>
<dbReference type="PANTHER" id="PTHR42946">
    <property type="entry name" value="PHOSPHOHEXOSE MUTASE"/>
    <property type="match status" value="1"/>
</dbReference>
<dbReference type="Pfam" id="PF02878">
    <property type="entry name" value="PGM_PMM_I"/>
    <property type="match status" value="1"/>
</dbReference>
<dbReference type="Pfam" id="PF02879">
    <property type="entry name" value="PGM_PMM_II"/>
    <property type="match status" value="1"/>
</dbReference>
<dbReference type="Pfam" id="PF02880">
    <property type="entry name" value="PGM_PMM_III"/>
    <property type="match status" value="1"/>
</dbReference>
<dbReference type="Pfam" id="PF00408">
    <property type="entry name" value="PGM_PMM_IV"/>
    <property type="match status" value="1"/>
</dbReference>
<dbReference type="PRINTS" id="PR00509">
    <property type="entry name" value="PGMPMM"/>
</dbReference>
<dbReference type="SUPFAM" id="SSF55957">
    <property type="entry name" value="Phosphoglucomutase, C-terminal domain"/>
    <property type="match status" value="1"/>
</dbReference>
<dbReference type="SUPFAM" id="SSF53738">
    <property type="entry name" value="Phosphoglucomutase, first 3 domains"/>
    <property type="match status" value="3"/>
</dbReference>
<dbReference type="PROSITE" id="PS00710">
    <property type="entry name" value="PGM_PMM"/>
    <property type="match status" value="1"/>
</dbReference>
<keyword id="KW-0413">Isomerase</keyword>
<keyword id="KW-0460">Magnesium</keyword>
<keyword id="KW-0479">Metal-binding</keyword>
<keyword id="KW-0597">Phosphoprotein</keyword>
<feature type="chain" id="PRO_0000301389" description="Phosphoglucosamine mutase">
    <location>
        <begin position="1"/>
        <end position="451"/>
    </location>
</feature>
<feature type="active site" description="Phosphoserine intermediate" evidence="1">
    <location>
        <position position="101"/>
    </location>
</feature>
<feature type="binding site" description="via phosphate group" evidence="1">
    <location>
        <position position="101"/>
    </location>
    <ligand>
        <name>Mg(2+)</name>
        <dbReference type="ChEBI" id="CHEBI:18420"/>
    </ligand>
</feature>
<feature type="binding site" evidence="1">
    <location>
        <position position="240"/>
    </location>
    <ligand>
        <name>Mg(2+)</name>
        <dbReference type="ChEBI" id="CHEBI:18420"/>
    </ligand>
</feature>
<feature type="binding site" evidence="1">
    <location>
        <position position="242"/>
    </location>
    <ligand>
        <name>Mg(2+)</name>
        <dbReference type="ChEBI" id="CHEBI:18420"/>
    </ligand>
</feature>
<feature type="binding site" evidence="1">
    <location>
        <position position="244"/>
    </location>
    <ligand>
        <name>Mg(2+)</name>
        <dbReference type="ChEBI" id="CHEBI:18420"/>
    </ligand>
</feature>
<feature type="modified residue" description="Phosphoserine" evidence="1">
    <location>
        <position position="101"/>
    </location>
</feature>
<accession>Q1JH49</accession>